<feature type="chain" id="PRO_0000251943" description="Glycerophosphodiester phosphodiesterase 1">
    <location>
        <begin position="1"/>
        <end position="331"/>
    </location>
</feature>
<feature type="topological domain" description="Cytoplasmic" evidence="5">
    <location>
        <begin position="1"/>
        <end position="2"/>
    </location>
</feature>
<feature type="transmembrane region" description="Helical" evidence="5">
    <location>
        <begin position="3"/>
        <end position="23"/>
    </location>
</feature>
<feature type="topological domain" description="Lumenal" evidence="5">
    <location>
        <begin position="24"/>
        <end position="254"/>
    </location>
</feature>
<feature type="transmembrane region" description="Helical" evidence="5">
    <location>
        <begin position="255"/>
        <end position="275"/>
    </location>
</feature>
<feature type="topological domain" description="Cytoplasmic" evidence="5">
    <location>
        <begin position="276"/>
        <end position="331"/>
    </location>
</feature>
<feature type="domain" description="GP-PDE">
    <location>
        <begin position="65"/>
        <end position="331"/>
    </location>
</feature>
<feature type="binding site" evidence="5">
    <location>
        <position position="97"/>
    </location>
    <ligand>
        <name>Mg(2+)</name>
        <dbReference type="ChEBI" id="CHEBI:18420"/>
    </ligand>
</feature>
<feature type="binding site" evidence="5">
    <location>
        <position position="99"/>
    </location>
    <ligand>
        <name>Mg(2+)</name>
        <dbReference type="ChEBI" id="CHEBI:18420"/>
    </ligand>
</feature>
<feature type="binding site" evidence="5">
    <location>
        <position position="174"/>
    </location>
    <ligand>
        <name>Mg(2+)</name>
        <dbReference type="ChEBI" id="CHEBI:18420"/>
    </ligand>
</feature>
<feature type="glycosylation site" description="N-linked (GlcNAc...) asparagine" evidence="5">
    <location>
        <position position="168"/>
    </location>
</feature>
<feature type="glycosylation site" description="N-linked (GlcNAc...) asparagine" evidence="5">
    <location>
        <position position="198"/>
    </location>
</feature>
<accession>Q3T0T0</accession>
<evidence type="ECO:0000250" key="1"/>
<evidence type="ECO:0000250" key="2">
    <source>
        <dbReference type="UniProtKB" id="Q9JL55"/>
    </source>
</evidence>
<evidence type="ECO:0000250" key="3">
    <source>
        <dbReference type="UniProtKB" id="Q9JL56"/>
    </source>
</evidence>
<evidence type="ECO:0000250" key="4">
    <source>
        <dbReference type="UniProtKB" id="Q9NZC3"/>
    </source>
</evidence>
<evidence type="ECO:0000255" key="5"/>
<evidence type="ECO:0000305" key="6"/>
<organism>
    <name type="scientific">Bos taurus</name>
    <name type="common">Bovine</name>
    <dbReference type="NCBI Taxonomy" id="9913"/>
    <lineage>
        <taxon>Eukaryota</taxon>
        <taxon>Metazoa</taxon>
        <taxon>Chordata</taxon>
        <taxon>Craniata</taxon>
        <taxon>Vertebrata</taxon>
        <taxon>Euteleostomi</taxon>
        <taxon>Mammalia</taxon>
        <taxon>Eutheria</taxon>
        <taxon>Laurasiatheria</taxon>
        <taxon>Artiodactyla</taxon>
        <taxon>Ruminantia</taxon>
        <taxon>Pecora</taxon>
        <taxon>Bovidae</taxon>
        <taxon>Bovinae</taxon>
        <taxon>Bos</taxon>
    </lineage>
</organism>
<reference key="1">
    <citation type="submission" date="2005-08" db="EMBL/GenBank/DDBJ databases">
        <authorList>
            <consortium name="NIH - Mammalian Gene Collection (MGC) project"/>
        </authorList>
    </citation>
    <scope>NUCLEOTIDE SEQUENCE [LARGE SCALE MRNA]</scope>
    <source>
        <strain>Crossbred X Angus</strain>
        <tissue>Ileum</tissue>
    </source>
</reference>
<gene>
    <name evidence="3" type="primary">GDE1</name>
    <name evidence="3" type="synonym">MIR16</name>
</gene>
<dbReference type="EC" id="3.1.4.44" evidence="2"/>
<dbReference type="EC" id="3.1.4.-" evidence="3"/>
<dbReference type="EMBL" id="BC102273">
    <property type="protein sequence ID" value="AAI02274.1"/>
    <property type="molecule type" value="mRNA"/>
</dbReference>
<dbReference type="RefSeq" id="NP_001029858.1">
    <property type="nucleotide sequence ID" value="NM_001034686.2"/>
</dbReference>
<dbReference type="SMR" id="Q3T0T0"/>
<dbReference type="FunCoup" id="Q3T0T0">
    <property type="interactions" value="649"/>
</dbReference>
<dbReference type="STRING" id="9913.ENSBTAP00000002710"/>
<dbReference type="GlyCosmos" id="Q3T0T0">
    <property type="glycosylation" value="2 sites, No reported glycans"/>
</dbReference>
<dbReference type="GlyGen" id="Q3T0T0">
    <property type="glycosylation" value="2 sites"/>
</dbReference>
<dbReference type="PaxDb" id="9913-ENSBTAP00000002710"/>
<dbReference type="Ensembl" id="ENSBTAT00000002710.7">
    <property type="protein sequence ID" value="ENSBTAP00000002710.5"/>
    <property type="gene ID" value="ENSBTAG00000002101.7"/>
</dbReference>
<dbReference type="GeneID" id="539978"/>
<dbReference type="KEGG" id="bta:539978"/>
<dbReference type="CTD" id="51573"/>
<dbReference type="VEuPathDB" id="HostDB:ENSBTAG00000002101"/>
<dbReference type="VGNC" id="VGNC:29298">
    <property type="gene designation" value="GDE1"/>
</dbReference>
<dbReference type="eggNOG" id="KOG2258">
    <property type="taxonomic scope" value="Eukaryota"/>
</dbReference>
<dbReference type="GeneTree" id="ENSGT00510000047820"/>
<dbReference type="HOGENOM" id="CLU_030006_2_1_1"/>
<dbReference type="InParanoid" id="Q3T0T0"/>
<dbReference type="OMA" id="KHHWMTL"/>
<dbReference type="OrthoDB" id="197419at2759"/>
<dbReference type="TreeFam" id="TF313692"/>
<dbReference type="Reactome" id="R-BTA-6814848">
    <property type="pathway name" value="Glycerophospholipid catabolism"/>
</dbReference>
<dbReference type="Proteomes" id="UP000009136">
    <property type="component" value="Chromosome 25"/>
</dbReference>
<dbReference type="Bgee" id="ENSBTAG00000002101">
    <property type="expression patterns" value="Expressed in abomasum and 103 other cell types or tissues"/>
</dbReference>
<dbReference type="GO" id="GO:0030659">
    <property type="term" value="C:cytoplasmic vesicle membrane"/>
    <property type="evidence" value="ECO:0007669"/>
    <property type="project" value="UniProtKB-SubCell"/>
</dbReference>
<dbReference type="GO" id="GO:0005886">
    <property type="term" value="C:plasma membrane"/>
    <property type="evidence" value="ECO:0000250"/>
    <property type="project" value="UniProtKB"/>
</dbReference>
<dbReference type="GO" id="GO:0008889">
    <property type="term" value="F:glycerophosphodiester phosphodiesterase activity"/>
    <property type="evidence" value="ECO:0000250"/>
    <property type="project" value="UniProtKB"/>
</dbReference>
<dbReference type="GO" id="GO:0047395">
    <property type="term" value="F:glycerophosphoinositol glycerophosphodiesterase activity"/>
    <property type="evidence" value="ECO:0000250"/>
    <property type="project" value="UniProtKB"/>
</dbReference>
<dbReference type="GO" id="GO:0004622">
    <property type="term" value="F:lysophospholipase activity"/>
    <property type="evidence" value="ECO:0000250"/>
    <property type="project" value="UniProtKB"/>
</dbReference>
<dbReference type="GO" id="GO:0046872">
    <property type="term" value="F:metal ion binding"/>
    <property type="evidence" value="ECO:0007669"/>
    <property type="project" value="UniProtKB-KW"/>
</dbReference>
<dbReference type="GO" id="GO:0006580">
    <property type="term" value="P:ethanolamine metabolic process"/>
    <property type="evidence" value="ECO:0000250"/>
    <property type="project" value="UniProtKB"/>
</dbReference>
<dbReference type="GO" id="GO:0070291">
    <property type="term" value="P:N-acylethanolamine metabolic process"/>
    <property type="evidence" value="ECO:0000250"/>
    <property type="project" value="UniProtKB"/>
</dbReference>
<dbReference type="GO" id="GO:0006644">
    <property type="term" value="P:phospholipid metabolic process"/>
    <property type="evidence" value="ECO:0000250"/>
    <property type="project" value="UniProtKB"/>
</dbReference>
<dbReference type="CDD" id="cd08573">
    <property type="entry name" value="GDPD_GDE1"/>
    <property type="match status" value="1"/>
</dbReference>
<dbReference type="FunFam" id="3.20.20.190:FF:000029">
    <property type="entry name" value="Glycerophosphodiester phosphodiesterase 1 isoform X1"/>
    <property type="match status" value="1"/>
</dbReference>
<dbReference type="Gene3D" id="3.20.20.190">
    <property type="entry name" value="Phosphatidylinositol (PI) phosphodiesterase"/>
    <property type="match status" value="1"/>
</dbReference>
<dbReference type="InterPro" id="IPR030395">
    <property type="entry name" value="GP_PDE_dom"/>
</dbReference>
<dbReference type="InterPro" id="IPR017946">
    <property type="entry name" value="PLC-like_Pdiesterase_TIM-brl"/>
</dbReference>
<dbReference type="PANTHER" id="PTHR46320">
    <property type="entry name" value="GLYCEROPHOSPHODIESTER PHOSPHODIESTERASE 1"/>
    <property type="match status" value="1"/>
</dbReference>
<dbReference type="PANTHER" id="PTHR46320:SF1">
    <property type="entry name" value="GLYCEROPHOSPHODIESTER PHOSPHODIESTERASE 1"/>
    <property type="match status" value="1"/>
</dbReference>
<dbReference type="Pfam" id="PF03009">
    <property type="entry name" value="GDPD"/>
    <property type="match status" value="1"/>
</dbReference>
<dbReference type="SUPFAM" id="SSF51695">
    <property type="entry name" value="PLC-like phosphodiesterases"/>
    <property type="match status" value="1"/>
</dbReference>
<dbReference type="PROSITE" id="PS51704">
    <property type="entry name" value="GP_PDE"/>
    <property type="match status" value="1"/>
</dbReference>
<protein>
    <recommendedName>
        <fullName evidence="4">Glycerophosphodiester phosphodiesterase 1</fullName>
    </recommendedName>
    <alternativeName>
        <fullName evidence="6">Glycerophosphoinositol glycerophosphodiesterase GDE1</fullName>
        <ecNumber evidence="2">3.1.4.44</ecNumber>
    </alternativeName>
    <alternativeName>
        <fullName evidence="6">Lysophospholipase D GDE1</fullName>
        <ecNumber evidence="3">3.1.4.-</ecNumber>
    </alternativeName>
    <alternativeName>
        <fullName evidence="3">Membrane-interacting protein of RGS16</fullName>
    </alternativeName>
</protein>
<proteinExistence type="evidence at transcript level"/>
<name>GDE1_BOVIN</name>
<sequence length="331" mass="37653">MWLWEEQGGLMGPFSFLLLVLLLLTRSPFNACLFTGSLYLLLRLFSFEPVPSRRAMQVLKPRDRVSAIAHRGGSHDAPENTLAAIRQAAKNGAAGVELDLEFTADGIPVLMHDSTVDRTTDGTGRLCDLTFEQIRKLNPAANHRLRNDFPNEKIPTLREAVAECLNHNLTIFFDVKGHAYKATDALKKVYMEFPKLYNNSIVCSFLPEVIYKMRQTDQNVVTALIHRPWSLSHTGDGKPRFESFWKQSMFVALDILLDWSMHNILWYLCGVSAFLAQKDFISPDYVKKWSAKGIQVVAWTVNTFDEKSYYESHLGSSYITDSMLEDCTPEF</sequence>
<comment type="function">
    <text evidence="2 3">Hydrolyzes the phosphodiester bond of glycerophosphodiesters such as glycerophosphoinositol (GroPIns) and glycerophosphoethanolamine (GroPEth), to yield a glycerol phosphate and an alcohol (By similarity). Hydrolyzes glycerophospho-N-acylethanolamines to N-acylethanolamines in the brain and participates in bioactive N-acylethanolamine biosynthesis such as anandamide (an endocannabinoid), N-palmitoylethanolamine (an anti-inflammatory), and N-oleoylethanolamine (an anorexic). In addition, has a lysophospholipase D activity by hydrolyzing N-acyl-lysoplasmenylethanolamine (N-acyl-lysoPlsEt) to N-acylethanolamine. However lysophospholipase D activity is lower than glycerophosphodiester phosphodiesterase activity (By similarity). Has little or no activity towards glycerophosphocholine (By similarity).</text>
</comment>
<comment type="catalytic activity">
    <reaction evidence="2">
        <text>sn-glycero-3-phospho-1D-myo-inositol + H2O = myo-inositol + sn-glycerol 3-phosphate + H(+)</text>
        <dbReference type="Rhea" id="RHEA:16501"/>
        <dbReference type="ChEBI" id="CHEBI:15377"/>
        <dbReference type="ChEBI" id="CHEBI:15378"/>
        <dbReference type="ChEBI" id="CHEBI:17268"/>
        <dbReference type="ChEBI" id="CHEBI:57597"/>
        <dbReference type="ChEBI" id="CHEBI:58444"/>
        <dbReference type="EC" id="3.1.4.44"/>
    </reaction>
    <physiologicalReaction direction="left-to-right" evidence="2">
        <dbReference type="Rhea" id="RHEA:16502"/>
    </physiologicalReaction>
</comment>
<comment type="catalytic activity">
    <reaction evidence="3">
        <text>1-O-(1Z-octadecenyl)-sn-glycero-3-phospho-(N-5Z,8Z,11Z,14Z-eicosatetraenoyl)-ethanolamine + H2O = 1-O-(1Z-octadecenyl)-sn-glycero-3-phosphate + N-(5Z,8Z,11Z,14Z-eicosatetraenoyl)-ethanolamine + H(+)</text>
        <dbReference type="Rhea" id="RHEA:53192"/>
        <dbReference type="ChEBI" id="CHEBI:2700"/>
        <dbReference type="ChEBI" id="CHEBI:15377"/>
        <dbReference type="ChEBI" id="CHEBI:15378"/>
        <dbReference type="ChEBI" id="CHEBI:137016"/>
        <dbReference type="ChEBI" id="CHEBI:137017"/>
    </reaction>
    <physiologicalReaction direction="left-to-right" evidence="3">
        <dbReference type="Rhea" id="RHEA:53193"/>
    </physiologicalReaction>
</comment>
<comment type="catalytic activity">
    <reaction evidence="3">
        <text>1-O-(1Z-octadecenyl)-sn-glycero-3-phospho-(N-9Z-octadecenoyl)-ethanolamine + H2O = 1-O-(1Z-octadecenyl)-sn-glycero-3-phosphate + N-(9Z-octadecenoyl) ethanolamine + H(+)</text>
        <dbReference type="Rhea" id="RHEA:53188"/>
        <dbReference type="ChEBI" id="CHEBI:15377"/>
        <dbReference type="ChEBI" id="CHEBI:15378"/>
        <dbReference type="ChEBI" id="CHEBI:71466"/>
        <dbReference type="ChEBI" id="CHEBI:137010"/>
        <dbReference type="ChEBI" id="CHEBI:137017"/>
    </reaction>
    <physiologicalReaction direction="left-to-right" evidence="3">
        <dbReference type="Rhea" id="RHEA:53189"/>
    </physiologicalReaction>
</comment>
<comment type="catalytic activity">
    <reaction evidence="3">
        <text>1-O-(1Z-octadecenyl)-sn-glycero-3-phospho-N-hexadecanoyl-ethanolamine + H2O = 1-O-(1Z-octadecenyl)-sn-glycero-3-phosphate + N-hexadecanoylethanolamine + H(+)</text>
        <dbReference type="Rhea" id="RHEA:53184"/>
        <dbReference type="ChEBI" id="CHEBI:15377"/>
        <dbReference type="ChEBI" id="CHEBI:15378"/>
        <dbReference type="ChEBI" id="CHEBI:71464"/>
        <dbReference type="ChEBI" id="CHEBI:137009"/>
        <dbReference type="ChEBI" id="CHEBI:137017"/>
    </reaction>
    <physiologicalReaction direction="left-to-right" evidence="3">
        <dbReference type="Rhea" id="RHEA:53185"/>
    </physiologicalReaction>
</comment>
<comment type="catalytic activity">
    <reaction evidence="3">
        <text>N-(4Z,7Z,10Z,13Z,16Z,19Z)-docosahexaenoyl-sn-glycero-3-phosphoethanolamine + H2O = N-(4Z,7Z,10Z,13Z,16Z,19Z)-docosahexaenoyl ethanolamine + sn-glycerol 3-phosphate + H(+)</text>
        <dbReference type="Rhea" id="RHEA:45444"/>
        <dbReference type="ChEBI" id="CHEBI:15377"/>
        <dbReference type="ChEBI" id="CHEBI:15378"/>
        <dbReference type="ChEBI" id="CHEBI:57597"/>
        <dbReference type="ChEBI" id="CHEBI:85250"/>
        <dbReference type="ChEBI" id="CHEBI:85252"/>
    </reaction>
    <physiologicalReaction direction="left-to-right" evidence="3">
        <dbReference type="Rhea" id="RHEA:45445"/>
    </physiologicalReaction>
</comment>
<comment type="catalytic activity">
    <reaction evidence="3">
        <text>N-eicosanoyl-sn-glycero-3-phosphoethanolamine + H2O = N-eicosanoyl ethanolamine + sn-glycerol 3-phosphate + H(+)</text>
        <dbReference type="Rhea" id="RHEA:45440"/>
        <dbReference type="ChEBI" id="CHEBI:15377"/>
        <dbReference type="ChEBI" id="CHEBI:15378"/>
        <dbReference type="ChEBI" id="CHEBI:57597"/>
        <dbReference type="ChEBI" id="CHEBI:85228"/>
        <dbReference type="ChEBI" id="CHEBI:85253"/>
    </reaction>
    <physiologicalReaction direction="left-to-right" evidence="3">
        <dbReference type="Rhea" id="RHEA:45441"/>
    </physiologicalReaction>
</comment>
<comment type="catalytic activity">
    <reaction evidence="3">
        <text>N-hexadecanoyl-sn-glycero-3-phosphoethanolamine + H2O = N-hexadecanoylethanolamine + sn-glycerol 3-phosphate + H(+)</text>
        <dbReference type="Rhea" id="RHEA:45436"/>
        <dbReference type="ChEBI" id="CHEBI:15377"/>
        <dbReference type="ChEBI" id="CHEBI:15378"/>
        <dbReference type="ChEBI" id="CHEBI:57597"/>
        <dbReference type="ChEBI" id="CHEBI:71464"/>
        <dbReference type="ChEBI" id="CHEBI:85226"/>
    </reaction>
    <physiologicalReaction direction="left-to-right" evidence="3">
        <dbReference type="Rhea" id="RHEA:45437"/>
    </physiologicalReaction>
</comment>
<comment type="catalytic activity">
    <reaction evidence="3">
        <text>N-(9Z-octadecenoyl)-sn-glycero-3-phosphoethanolamine + H2O = N-(9Z-octadecenoyl) ethanolamine + sn-glycerol 3-phosphate + H(+)</text>
        <dbReference type="Rhea" id="RHEA:45432"/>
        <dbReference type="ChEBI" id="CHEBI:15377"/>
        <dbReference type="ChEBI" id="CHEBI:15378"/>
        <dbReference type="ChEBI" id="CHEBI:57597"/>
        <dbReference type="ChEBI" id="CHEBI:71466"/>
        <dbReference type="ChEBI" id="CHEBI:85229"/>
    </reaction>
    <physiologicalReaction direction="left-to-right" evidence="3">
        <dbReference type="Rhea" id="RHEA:45433"/>
    </physiologicalReaction>
</comment>
<comment type="catalytic activity">
    <reaction evidence="3">
        <text>N-(5Z,8Z,11Z,14Z-eicosatetraenoyl)-sn-glycero-3-phosphoethanolamine + H2O = N-(5Z,8Z,11Z,14Z-eicosatetraenoyl)-ethanolamine + sn-glycerol 3-phosphate + H(+)</text>
        <dbReference type="Rhea" id="RHEA:45428"/>
        <dbReference type="ChEBI" id="CHEBI:2700"/>
        <dbReference type="ChEBI" id="CHEBI:15377"/>
        <dbReference type="ChEBI" id="CHEBI:15378"/>
        <dbReference type="ChEBI" id="CHEBI:57597"/>
        <dbReference type="ChEBI" id="CHEBI:85230"/>
    </reaction>
    <physiologicalReaction direction="left-to-right" evidence="3">
        <dbReference type="Rhea" id="RHEA:45429"/>
    </physiologicalReaction>
</comment>
<comment type="cofactor">
    <cofactor evidence="2">
        <name>Mg(2+)</name>
        <dbReference type="ChEBI" id="CHEBI:18420"/>
    </cofactor>
</comment>
<comment type="activity regulation">
    <text evidence="2 3">Inhibited by EDTA, calcium chloride, and zinc chloride. Enhanced by magnesium chloride (By similarity). Glycerophosphodiester phosphodiesterase activity can be modulated by G-protein signaling pathways (By similarity).</text>
</comment>
<comment type="subunit">
    <text evidence="1 2">Interacts with PRAF2 (By similarity). Interacts with RGS16 (By similarity).</text>
</comment>
<comment type="subcellular location">
    <subcellularLocation>
        <location evidence="2">Cell membrane</location>
        <topology evidence="5">Multi-pass membrane protein</topology>
    </subcellularLocation>
    <subcellularLocation>
        <location evidence="2">Cytoplasmic vesicle membrane</location>
        <topology evidence="5">Multi-pass membrane protein</topology>
    </subcellularLocation>
    <text evidence="2">Perinuclear vesicles and cell membrane.</text>
</comment>
<comment type="PTM">
    <text evidence="2">N-glycosylated.</text>
</comment>
<comment type="similarity">
    <text evidence="6">Belongs to the glycerophosphoryl diester phosphodiesterase family.</text>
</comment>
<keyword id="KW-1003">Cell membrane</keyword>
<keyword id="KW-0968">Cytoplasmic vesicle</keyword>
<keyword id="KW-0325">Glycoprotein</keyword>
<keyword id="KW-0378">Hydrolase</keyword>
<keyword id="KW-0443">Lipid metabolism</keyword>
<keyword id="KW-0460">Magnesium</keyword>
<keyword id="KW-0472">Membrane</keyword>
<keyword id="KW-0479">Metal-binding</keyword>
<keyword id="KW-1185">Reference proteome</keyword>
<keyword id="KW-0812">Transmembrane</keyword>
<keyword id="KW-1133">Transmembrane helix</keyword>